<reference key="1">
    <citation type="journal article" date="2009" name="Environ. Microbiol.">
        <title>Contribution of mobile genetic elements to Desulfovibrio vulgaris genome plasticity.</title>
        <authorList>
            <person name="Walker C.B."/>
            <person name="Stolyar S."/>
            <person name="Chivian D."/>
            <person name="Pinel N."/>
            <person name="Gabster J.A."/>
            <person name="Dehal P.S."/>
            <person name="He Z."/>
            <person name="Yang Z.K."/>
            <person name="Yen H.C."/>
            <person name="Zhou J."/>
            <person name="Wall J.D."/>
            <person name="Hazen T.C."/>
            <person name="Arkin A.P."/>
            <person name="Stahl D.A."/>
        </authorList>
    </citation>
    <scope>NUCLEOTIDE SEQUENCE [LARGE SCALE GENOMIC DNA]</scope>
    <source>
        <strain>DP4</strain>
    </source>
</reference>
<protein>
    <recommendedName>
        <fullName evidence="1">UDP-N-acetylmuramoylalanine--D-glutamate ligase</fullName>
        <ecNumber evidence="1">6.3.2.9</ecNumber>
    </recommendedName>
    <alternativeName>
        <fullName evidence="1">D-glutamic acid-adding enzyme</fullName>
    </alternativeName>
    <alternativeName>
        <fullName evidence="1">UDP-N-acetylmuramoyl-L-alanyl-D-glutamate synthetase</fullName>
    </alternativeName>
</protein>
<accession>A1VBE6</accession>
<organism>
    <name type="scientific">Nitratidesulfovibrio vulgaris (strain DP4)</name>
    <name type="common">Desulfovibrio vulgaris</name>
    <dbReference type="NCBI Taxonomy" id="391774"/>
    <lineage>
        <taxon>Bacteria</taxon>
        <taxon>Pseudomonadati</taxon>
        <taxon>Thermodesulfobacteriota</taxon>
        <taxon>Desulfovibrionia</taxon>
        <taxon>Desulfovibrionales</taxon>
        <taxon>Desulfovibrionaceae</taxon>
        <taxon>Nitratidesulfovibrio</taxon>
    </lineage>
</organism>
<dbReference type="EC" id="6.3.2.9" evidence="1"/>
<dbReference type="EMBL" id="CP000527">
    <property type="protein sequence ID" value="ABM27762.1"/>
    <property type="molecule type" value="Genomic_DNA"/>
</dbReference>
<dbReference type="RefSeq" id="WP_010939776.1">
    <property type="nucleotide sequence ID" value="NC_008751.1"/>
</dbReference>
<dbReference type="SMR" id="A1VBE6"/>
<dbReference type="KEGG" id="dvl:Dvul_0739"/>
<dbReference type="HOGENOM" id="CLU_032540_0_0_7"/>
<dbReference type="UniPathway" id="UPA00219"/>
<dbReference type="Proteomes" id="UP000009173">
    <property type="component" value="Chromosome"/>
</dbReference>
<dbReference type="GO" id="GO:0005737">
    <property type="term" value="C:cytoplasm"/>
    <property type="evidence" value="ECO:0007669"/>
    <property type="project" value="UniProtKB-SubCell"/>
</dbReference>
<dbReference type="GO" id="GO:0005524">
    <property type="term" value="F:ATP binding"/>
    <property type="evidence" value="ECO:0007669"/>
    <property type="project" value="UniProtKB-UniRule"/>
</dbReference>
<dbReference type="GO" id="GO:0008764">
    <property type="term" value="F:UDP-N-acetylmuramoylalanine-D-glutamate ligase activity"/>
    <property type="evidence" value="ECO:0007669"/>
    <property type="project" value="UniProtKB-UniRule"/>
</dbReference>
<dbReference type="GO" id="GO:0051301">
    <property type="term" value="P:cell division"/>
    <property type="evidence" value="ECO:0007669"/>
    <property type="project" value="UniProtKB-KW"/>
</dbReference>
<dbReference type="GO" id="GO:0071555">
    <property type="term" value="P:cell wall organization"/>
    <property type="evidence" value="ECO:0007669"/>
    <property type="project" value="UniProtKB-KW"/>
</dbReference>
<dbReference type="GO" id="GO:0009252">
    <property type="term" value="P:peptidoglycan biosynthetic process"/>
    <property type="evidence" value="ECO:0007669"/>
    <property type="project" value="UniProtKB-UniRule"/>
</dbReference>
<dbReference type="GO" id="GO:0008360">
    <property type="term" value="P:regulation of cell shape"/>
    <property type="evidence" value="ECO:0007669"/>
    <property type="project" value="UniProtKB-KW"/>
</dbReference>
<dbReference type="Gene3D" id="3.90.190.20">
    <property type="entry name" value="Mur ligase, C-terminal domain"/>
    <property type="match status" value="1"/>
</dbReference>
<dbReference type="Gene3D" id="3.40.1190.10">
    <property type="entry name" value="Mur-like, catalytic domain"/>
    <property type="match status" value="1"/>
</dbReference>
<dbReference type="Gene3D" id="3.40.50.720">
    <property type="entry name" value="NAD(P)-binding Rossmann-like Domain"/>
    <property type="match status" value="1"/>
</dbReference>
<dbReference type="HAMAP" id="MF_00639">
    <property type="entry name" value="MurD"/>
    <property type="match status" value="1"/>
</dbReference>
<dbReference type="InterPro" id="IPR036565">
    <property type="entry name" value="Mur-like_cat_sf"/>
</dbReference>
<dbReference type="InterPro" id="IPR004101">
    <property type="entry name" value="Mur_ligase_C"/>
</dbReference>
<dbReference type="InterPro" id="IPR036615">
    <property type="entry name" value="Mur_ligase_C_dom_sf"/>
</dbReference>
<dbReference type="InterPro" id="IPR013221">
    <property type="entry name" value="Mur_ligase_cen"/>
</dbReference>
<dbReference type="InterPro" id="IPR005762">
    <property type="entry name" value="MurD"/>
</dbReference>
<dbReference type="NCBIfam" id="TIGR01087">
    <property type="entry name" value="murD"/>
    <property type="match status" value="1"/>
</dbReference>
<dbReference type="PANTHER" id="PTHR43692">
    <property type="entry name" value="UDP-N-ACETYLMURAMOYLALANINE--D-GLUTAMATE LIGASE"/>
    <property type="match status" value="1"/>
</dbReference>
<dbReference type="PANTHER" id="PTHR43692:SF1">
    <property type="entry name" value="UDP-N-ACETYLMURAMOYLALANINE--D-GLUTAMATE LIGASE"/>
    <property type="match status" value="1"/>
</dbReference>
<dbReference type="Pfam" id="PF02875">
    <property type="entry name" value="Mur_ligase_C"/>
    <property type="match status" value="1"/>
</dbReference>
<dbReference type="Pfam" id="PF08245">
    <property type="entry name" value="Mur_ligase_M"/>
    <property type="match status" value="1"/>
</dbReference>
<dbReference type="Pfam" id="PF21799">
    <property type="entry name" value="MurD-like_N"/>
    <property type="match status" value="1"/>
</dbReference>
<dbReference type="SUPFAM" id="SSF51984">
    <property type="entry name" value="MurCD N-terminal domain"/>
    <property type="match status" value="1"/>
</dbReference>
<dbReference type="SUPFAM" id="SSF53623">
    <property type="entry name" value="MurD-like peptide ligases, catalytic domain"/>
    <property type="match status" value="1"/>
</dbReference>
<dbReference type="SUPFAM" id="SSF53244">
    <property type="entry name" value="MurD-like peptide ligases, peptide-binding domain"/>
    <property type="match status" value="1"/>
</dbReference>
<comment type="function">
    <text evidence="1">Cell wall formation. Catalyzes the addition of glutamate to the nucleotide precursor UDP-N-acetylmuramoyl-L-alanine (UMA).</text>
</comment>
<comment type="catalytic activity">
    <reaction evidence="1">
        <text>UDP-N-acetyl-alpha-D-muramoyl-L-alanine + D-glutamate + ATP = UDP-N-acetyl-alpha-D-muramoyl-L-alanyl-D-glutamate + ADP + phosphate + H(+)</text>
        <dbReference type="Rhea" id="RHEA:16429"/>
        <dbReference type="ChEBI" id="CHEBI:15378"/>
        <dbReference type="ChEBI" id="CHEBI:29986"/>
        <dbReference type="ChEBI" id="CHEBI:30616"/>
        <dbReference type="ChEBI" id="CHEBI:43474"/>
        <dbReference type="ChEBI" id="CHEBI:83898"/>
        <dbReference type="ChEBI" id="CHEBI:83900"/>
        <dbReference type="ChEBI" id="CHEBI:456216"/>
        <dbReference type="EC" id="6.3.2.9"/>
    </reaction>
</comment>
<comment type="pathway">
    <text evidence="1">Cell wall biogenesis; peptidoglycan biosynthesis.</text>
</comment>
<comment type="subcellular location">
    <subcellularLocation>
        <location evidence="1">Cytoplasm</location>
    </subcellularLocation>
</comment>
<comment type="similarity">
    <text evidence="1">Belongs to the MurCDEF family.</text>
</comment>
<gene>
    <name evidence="1" type="primary">murD</name>
    <name type="ordered locus">Dvul_0739</name>
</gene>
<name>MURD_NITV4</name>
<evidence type="ECO:0000255" key="1">
    <source>
        <dbReference type="HAMAP-Rule" id="MF_00639"/>
    </source>
</evidence>
<keyword id="KW-0067">ATP-binding</keyword>
<keyword id="KW-0131">Cell cycle</keyword>
<keyword id="KW-0132">Cell division</keyword>
<keyword id="KW-0133">Cell shape</keyword>
<keyword id="KW-0961">Cell wall biogenesis/degradation</keyword>
<keyword id="KW-0963">Cytoplasm</keyword>
<keyword id="KW-0436">Ligase</keyword>
<keyword id="KW-0547">Nucleotide-binding</keyword>
<keyword id="KW-0573">Peptidoglycan synthesis</keyword>
<sequence length="433" mass="46640">MTCDKEKTRGIRPGDIAVVVGTGRSGVAAARLLHAKGARVRVLERDAANVPATFAEWAAGAGVEIVCGAHDAAHFADAAVVVPSPGVAVATLRPYLPATGGPEVMAEMELAWRELSGEPVIAVTGTSGKTTTVSLCAHMLRTQGLSVFLGGNIGTPLCEYVLEGKRADVLVIEISSFQLQTCSTFRPRVAMLLNITANHLDYHADMQEYIDAKFRLFRCQDEDDLAVFGEGLAPLVDRYGVKARRVTFRATDRFAESRLFGAHNRANAEAAWTAAREFGVTLENALQAVATFAPMPHRLEQVAERGGVLYVNDSKCTTVSALRVALEAFDRPVLLLAGGKFKGGDLEGLIPLVRERVRAVMLFGASREVFEAAWRDVVPMTWDATLEEAVRRAASAARQGEVVLMAPATASFDLFRNYGHRGDVFRAAVESLA</sequence>
<feature type="chain" id="PRO_0000301424" description="UDP-N-acetylmuramoylalanine--D-glutamate ligase">
    <location>
        <begin position="1"/>
        <end position="433"/>
    </location>
</feature>
<feature type="binding site" evidence="1">
    <location>
        <begin position="125"/>
        <end position="131"/>
    </location>
    <ligand>
        <name>ATP</name>
        <dbReference type="ChEBI" id="CHEBI:30616"/>
    </ligand>
</feature>
<proteinExistence type="inferred from homology"/>